<name>KHSE_CHLPM</name>
<proteinExistence type="inferred from homology"/>
<protein>
    <recommendedName>
        <fullName evidence="1">Homoserine kinase</fullName>
        <shortName evidence="1">HK</shortName>
        <shortName evidence="1">HSK</shortName>
        <ecNumber evidence="1">2.7.1.39</ecNumber>
    </recommendedName>
</protein>
<keyword id="KW-0028">Amino-acid biosynthesis</keyword>
<keyword id="KW-0067">ATP-binding</keyword>
<keyword id="KW-0963">Cytoplasm</keyword>
<keyword id="KW-0418">Kinase</keyword>
<keyword id="KW-0547">Nucleotide-binding</keyword>
<keyword id="KW-0791">Threonine biosynthesis</keyword>
<keyword id="KW-0808">Transferase</keyword>
<dbReference type="EC" id="2.7.1.39" evidence="1"/>
<dbReference type="EMBL" id="CP000607">
    <property type="protein sequence ID" value="ABP37639.1"/>
    <property type="molecule type" value="Genomic_DNA"/>
</dbReference>
<dbReference type="SMR" id="A4SGN0"/>
<dbReference type="STRING" id="290318.Cvib_1629"/>
<dbReference type="KEGG" id="pvi:Cvib_1629"/>
<dbReference type="eggNOG" id="COG0083">
    <property type="taxonomic scope" value="Bacteria"/>
</dbReference>
<dbReference type="HOGENOM" id="CLU_041243_1_1_10"/>
<dbReference type="OrthoDB" id="9769912at2"/>
<dbReference type="UniPathway" id="UPA00050">
    <property type="reaction ID" value="UER00064"/>
</dbReference>
<dbReference type="GO" id="GO:0005737">
    <property type="term" value="C:cytoplasm"/>
    <property type="evidence" value="ECO:0007669"/>
    <property type="project" value="UniProtKB-SubCell"/>
</dbReference>
<dbReference type="GO" id="GO:0005524">
    <property type="term" value="F:ATP binding"/>
    <property type="evidence" value="ECO:0007669"/>
    <property type="project" value="UniProtKB-UniRule"/>
</dbReference>
<dbReference type="GO" id="GO:0004413">
    <property type="term" value="F:homoserine kinase activity"/>
    <property type="evidence" value="ECO:0007669"/>
    <property type="project" value="UniProtKB-UniRule"/>
</dbReference>
<dbReference type="GO" id="GO:0009088">
    <property type="term" value="P:threonine biosynthetic process"/>
    <property type="evidence" value="ECO:0007669"/>
    <property type="project" value="UniProtKB-UniRule"/>
</dbReference>
<dbReference type="Gene3D" id="3.30.230.10">
    <property type="match status" value="1"/>
</dbReference>
<dbReference type="Gene3D" id="3.30.70.890">
    <property type="entry name" value="GHMP kinase, C-terminal domain"/>
    <property type="match status" value="1"/>
</dbReference>
<dbReference type="HAMAP" id="MF_00384">
    <property type="entry name" value="Homoser_kinase"/>
    <property type="match status" value="1"/>
</dbReference>
<dbReference type="InterPro" id="IPR013750">
    <property type="entry name" value="GHMP_kinase_C_dom"/>
</dbReference>
<dbReference type="InterPro" id="IPR036554">
    <property type="entry name" value="GHMP_kinase_C_sf"/>
</dbReference>
<dbReference type="InterPro" id="IPR006204">
    <property type="entry name" value="GHMP_kinase_N_dom"/>
</dbReference>
<dbReference type="InterPro" id="IPR006203">
    <property type="entry name" value="GHMP_knse_ATP-bd_CS"/>
</dbReference>
<dbReference type="InterPro" id="IPR000870">
    <property type="entry name" value="Homoserine_kinase"/>
</dbReference>
<dbReference type="InterPro" id="IPR020568">
    <property type="entry name" value="Ribosomal_Su5_D2-typ_SF"/>
</dbReference>
<dbReference type="InterPro" id="IPR014721">
    <property type="entry name" value="Ribsml_uS5_D2-typ_fold_subgr"/>
</dbReference>
<dbReference type="NCBIfam" id="NF002288">
    <property type="entry name" value="PRK01212.1-4"/>
    <property type="match status" value="1"/>
</dbReference>
<dbReference type="NCBIfam" id="TIGR00191">
    <property type="entry name" value="thrB"/>
    <property type="match status" value="1"/>
</dbReference>
<dbReference type="PANTHER" id="PTHR20861:SF1">
    <property type="entry name" value="HOMOSERINE KINASE"/>
    <property type="match status" value="1"/>
</dbReference>
<dbReference type="PANTHER" id="PTHR20861">
    <property type="entry name" value="HOMOSERINE/4-DIPHOSPHOCYTIDYL-2-C-METHYL-D-ERYTHRITOL KINASE"/>
    <property type="match status" value="1"/>
</dbReference>
<dbReference type="Pfam" id="PF08544">
    <property type="entry name" value="GHMP_kinases_C"/>
    <property type="match status" value="1"/>
</dbReference>
<dbReference type="Pfam" id="PF00288">
    <property type="entry name" value="GHMP_kinases_N"/>
    <property type="match status" value="1"/>
</dbReference>
<dbReference type="PIRSF" id="PIRSF000676">
    <property type="entry name" value="Homoser_kin"/>
    <property type="match status" value="1"/>
</dbReference>
<dbReference type="PRINTS" id="PR00958">
    <property type="entry name" value="HOMSERKINASE"/>
</dbReference>
<dbReference type="SUPFAM" id="SSF55060">
    <property type="entry name" value="GHMP Kinase, C-terminal domain"/>
    <property type="match status" value="1"/>
</dbReference>
<dbReference type="SUPFAM" id="SSF54211">
    <property type="entry name" value="Ribosomal protein S5 domain 2-like"/>
    <property type="match status" value="1"/>
</dbReference>
<dbReference type="PROSITE" id="PS00627">
    <property type="entry name" value="GHMP_KINASES_ATP"/>
    <property type="match status" value="1"/>
</dbReference>
<reference key="1">
    <citation type="submission" date="2007-03" db="EMBL/GenBank/DDBJ databases">
        <title>Complete sequence of Prosthecochloris vibrioformis DSM 265.</title>
        <authorList>
            <consortium name="US DOE Joint Genome Institute"/>
            <person name="Copeland A."/>
            <person name="Lucas S."/>
            <person name="Lapidus A."/>
            <person name="Barry K."/>
            <person name="Detter J.C."/>
            <person name="Glavina del Rio T."/>
            <person name="Hammon N."/>
            <person name="Israni S."/>
            <person name="Pitluck S."/>
            <person name="Schmutz J."/>
            <person name="Larimer F."/>
            <person name="Land M."/>
            <person name="Hauser L."/>
            <person name="Mikhailova N."/>
            <person name="Li T."/>
            <person name="Overmann J."/>
            <person name="Schuster S.C."/>
            <person name="Bryant D.A."/>
            <person name="Richardson P."/>
        </authorList>
    </citation>
    <scope>NUCLEOTIDE SEQUENCE [LARGE SCALE GENOMIC DNA]</scope>
    <source>
        <strain>DSM 265 / 1930</strain>
    </source>
</reference>
<accession>A4SGN0</accession>
<feature type="chain" id="PRO_1000080126" description="Homoserine kinase">
    <location>
        <begin position="1"/>
        <end position="320"/>
    </location>
</feature>
<feature type="binding site" evidence="1">
    <location>
        <begin position="100"/>
        <end position="110"/>
    </location>
    <ligand>
        <name>ATP</name>
        <dbReference type="ChEBI" id="CHEBI:30616"/>
    </ligand>
</feature>
<organism>
    <name type="scientific">Chlorobium phaeovibrioides (strain DSM 265 / 1930)</name>
    <name type="common">Prosthecochloris vibrioformis (strain DSM 265)</name>
    <dbReference type="NCBI Taxonomy" id="290318"/>
    <lineage>
        <taxon>Bacteria</taxon>
        <taxon>Pseudomonadati</taxon>
        <taxon>Chlorobiota</taxon>
        <taxon>Chlorobiia</taxon>
        <taxon>Chlorobiales</taxon>
        <taxon>Chlorobiaceae</taxon>
        <taxon>Chlorobium/Pelodictyon group</taxon>
        <taxon>Chlorobium</taxon>
    </lineage>
</organism>
<evidence type="ECO:0000255" key="1">
    <source>
        <dbReference type="HAMAP-Rule" id="MF_00384"/>
    </source>
</evidence>
<sequence length="320" mass="33507">MKSVRGFASATVGNVACGFDILGFAITEPGDEVILTRSERKHTGCPVTISSISGDGGKLPLDPRKNTSSFVVLKFLEHIRTHKGQDCTGHISLELKKHLPLSSGMGSSAASAAAALAAANELLGRPCTKMELVHFAIEGERVACGSAHADNAAPAILGNFVLIRSYTPLDLIVIPPPEKLFCSLVHPHTELRTSFARSVLPTDITLKDATRQWGNVGALVAGLLTSDYALVGRSLVDVVAEPKRAPLIPGFAEVKEAALNAGALGCSIAGSGPSIFAFSDSAETAHAAGEAMQKAFLASKKSLKSDMWVSPICREGARIL</sequence>
<gene>
    <name evidence="1" type="primary">thrB</name>
    <name type="ordered locus">Cvib_1629</name>
</gene>
<comment type="function">
    <text evidence="1">Catalyzes the ATP-dependent phosphorylation of L-homoserine to L-homoserine phosphate.</text>
</comment>
<comment type="catalytic activity">
    <reaction evidence="1">
        <text>L-homoserine + ATP = O-phospho-L-homoserine + ADP + H(+)</text>
        <dbReference type="Rhea" id="RHEA:13985"/>
        <dbReference type="ChEBI" id="CHEBI:15378"/>
        <dbReference type="ChEBI" id="CHEBI:30616"/>
        <dbReference type="ChEBI" id="CHEBI:57476"/>
        <dbReference type="ChEBI" id="CHEBI:57590"/>
        <dbReference type="ChEBI" id="CHEBI:456216"/>
        <dbReference type="EC" id="2.7.1.39"/>
    </reaction>
</comment>
<comment type="pathway">
    <text evidence="1">Amino-acid biosynthesis; L-threonine biosynthesis; L-threonine from L-aspartate: step 4/5.</text>
</comment>
<comment type="subcellular location">
    <subcellularLocation>
        <location evidence="1">Cytoplasm</location>
    </subcellularLocation>
</comment>
<comment type="similarity">
    <text evidence="1">Belongs to the GHMP kinase family. Homoserine kinase subfamily.</text>
</comment>